<protein>
    <recommendedName>
        <fullName evidence="1">Lipoprotein signal peptidase</fullName>
        <ecNumber evidence="1">3.4.23.36</ecNumber>
    </recommendedName>
    <alternativeName>
        <fullName evidence="1">Prolipoprotein signal peptidase</fullName>
    </alternativeName>
    <alternativeName>
        <fullName evidence="1">Signal peptidase II</fullName>
        <shortName evidence="1">SPase II</shortName>
    </alternativeName>
</protein>
<sequence length="155" mass="17625">MFKKNRWFWIVAVIGLILDQVTKYITVQSFEQIGDTFPIIPGVFHFTYVINTGAAFSAFRGGVGWLKWLSLLVSLGLMAFAYFGPHLNRWEQLAYGFILAGAFGNGIDRFLFGYVVDFLDFRLINFPVFNLADVFINIGIICLLISTFPHKSRVP</sequence>
<evidence type="ECO:0000255" key="1">
    <source>
        <dbReference type="HAMAP-Rule" id="MF_00161"/>
    </source>
</evidence>
<proteinExistence type="inferred from homology"/>
<name>LSPA_MICAN</name>
<keyword id="KW-0064">Aspartyl protease</keyword>
<keyword id="KW-0997">Cell inner membrane</keyword>
<keyword id="KW-1003">Cell membrane</keyword>
<keyword id="KW-0378">Hydrolase</keyword>
<keyword id="KW-0472">Membrane</keyword>
<keyword id="KW-0645">Protease</keyword>
<keyword id="KW-0812">Transmembrane</keyword>
<keyword id="KW-1133">Transmembrane helix</keyword>
<comment type="function">
    <text evidence="1">This protein specifically catalyzes the removal of signal peptides from prolipoproteins.</text>
</comment>
<comment type="catalytic activity">
    <reaction evidence="1">
        <text>Release of signal peptides from bacterial membrane prolipoproteins. Hydrolyzes -Xaa-Yaa-Zaa-|-(S,diacylglyceryl)Cys-, in which Xaa is hydrophobic (preferably Leu), and Yaa (Ala or Ser) and Zaa (Gly or Ala) have small, neutral side chains.</text>
        <dbReference type="EC" id="3.4.23.36"/>
    </reaction>
</comment>
<comment type="pathway">
    <text evidence="1">Protein modification; lipoprotein biosynthesis (signal peptide cleavage).</text>
</comment>
<comment type="subcellular location">
    <subcellularLocation>
        <location evidence="1">Cell inner membrane</location>
        <topology evidence="1">Multi-pass membrane protein</topology>
    </subcellularLocation>
</comment>
<comment type="similarity">
    <text evidence="1">Belongs to the peptidase A8 family.</text>
</comment>
<organism>
    <name type="scientific">Microcystis aeruginosa (strain NIES-843 / IAM M-2473)</name>
    <dbReference type="NCBI Taxonomy" id="449447"/>
    <lineage>
        <taxon>Bacteria</taxon>
        <taxon>Bacillati</taxon>
        <taxon>Cyanobacteriota</taxon>
        <taxon>Cyanophyceae</taxon>
        <taxon>Oscillatoriophycideae</taxon>
        <taxon>Chroococcales</taxon>
        <taxon>Microcystaceae</taxon>
        <taxon>Microcystis</taxon>
    </lineage>
</organism>
<feature type="chain" id="PRO_1000097266" description="Lipoprotein signal peptidase">
    <location>
        <begin position="1"/>
        <end position="155"/>
    </location>
</feature>
<feature type="transmembrane region" description="Helical" evidence="1">
    <location>
        <begin position="7"/>
        <end position="27"/>
    </location>
</feature>
<feature type="transmembrane region" description="Helical" evidence="1">
    <location>
        <begin position="39"/>
        <end position="59"/>
    </location>
</feature>
<feature type="transmembrane region" description="Helical" evidence="1">
    <location>
        <begin position="63"/>
        <end position="83"/>
    </location>
</feature>
<feature type="transmembrane region" description="Helical" evidence="1">
    <location>
        <begin position="96"/>
        <end position="116"/>
    </location>
</feature>
<feature type="transmembrane region" description="Helical" evidence="1">
    <location>
        <begin position="126"/>
        <end position="146"/>
    </location>
</feature>
<feature type="active site" evidence="1">
    <location>
        <position position="117"/>
    </location>
</feature>
<feature type="active site" evidence="1">
    <location>
        <position position="133"/>
    </location>
</feature>
<gene>
    <name evidence="1" type="primary">lspA</name>
    <name type="ordered locus">MAE_00150</name>
</gene>
<accession>B0JFT3</accession>
<reference key="1">
    <citation type="journal article" date="2007" name="DNA Res.">
        <title>Complete genomic structure of the bloom-forming toxic cyanobacterium Microcystis aeruginosa NIES-843.</title>
        <authorList>
            <person name="Kaneko T."/>
            <person name="Nakajima N."/>
            <person name="Okamoto S."/>
            <person name="Suzuki I."/>
            <person name="Tanabe Y."/>
            <person name="Tamaoki M."/>
            <person name="Nakamura Y."/>
            <person name="Kasai F."/>
            <person name="Watanabe A."/>
            <person name="Kawashima K."/>
            <person name="Kishida Y."/>
            <person name="Ono A."/>
            <person name="Shimizu Y."/>
            <person name="Takahashi C."/>
            <person name="Minami C."/>
            <person name="Fujishiro T."/>
            <person name="Kohara M."/>
            <person name="Katoh M."/>
            <person name="Nakazaki N."/>
            <person name="Nakayama S."/>
            <person name="Yamada M."/>
            <person name="Tabata S."/>
            <person name="Watanabe M.M."/>
        </authorList>
    </citation>
    <scope>NUCLEOTIDE SEQUENCE [LARGE SCALE GENOMIC DNA]</scope>
    <source>
        <strain>NIES-843 / IAM M-247</strain>
    </source>
</reference>
<dbReference type="EC" id="3.4.23.36" evidence="1"/>
<dbReference type="EMBL" id="AP009552">
    <property type="protein sequence ID" value="BAF99836.1"/>
    <property type="molecule type" value="Genomic_DNA"/>
</dbReference>
<dbReference type="RefSeq" id="WP_012263788.1">
    <property type="nucleotide sequence ID" value="NC_010296.1"/>
</dbReference>
<dbReference type="SMR" id="B0JFT3"/>
<dbReference type="STRING" id="449447.MAE_00150"/>
<dbReference type="PaxDb" id="449447-MAE_00150"/>
<dbReference type="EnsemblBacteria" id="BAF99836">
    <property type="protein sequence ID" value="BAF99836"/>
    <property type="gene ID" value="MAE_00150"/>
</dbReference>
<dbReference type="KEGG" id="mar:MAE_00150"/>
<dbReference type="PATRIC" id="fig|449447.4.peg.14"/>
<dbReference type="eggNOG" id="COG0597">
    <property type="taxonomic scope" value="Bacteria"/>
</dbReference>
<dbReference type="HOGENOM" id="CLU_083252_3_2_3"/>
<dbReference type="BioCyc" id="MAER449447:MAE_RS00070-MONOMER"/>
<dbReference type="UniPathway" id="UPA00665"/>
<dbReference type="Proteomes" id="UP000001510">
    <property type="component" value="Chromosome"/>
</dbReference>
<dbReference type="GO" id="GO:0005886">
    <property type="term" value="C:plasma membrane"/>
    <property type="evidence" value="ECO:0007669"/>
    <property type="project" value="UniProtKB-SubCell"/>
</dbReference>
<dbReference type="GO" id="GO:0004190">
    <property type="term" value="F:aspartic-type endopeptidase activity"/>
    <property type="evidence" value="ECO:0007669"/>
    <property type="project" value="UniProtKB-UniRule"/>
</dbReference>
<dbReference type="GO" id="GO:0006508">
    <property type="term" value="P:proteolysis"/>
    <property type="evidence" value="ECO:0007669"/>
    <property type="project" value="UniProtKB-KW"/>
</dbReference>
<dbReference type="HAMAP" id="MF_00161">
    <property type="entry name" value="LspA"/>
    <property type="match status" value="1"/>
</dbReference>
<dbReference type="InterPro" id="IPR001872">
    <property type="entry name" value="Peptidase_A8"/>
</dbReference>
<dbReference type="NCBIfam" id="TIGR00077">
    <property type="entry name" value="lspA"/>
    <property type="match status" value="1"/>
</dbReference>
<dbReference type="PANTHER" id="PTHR33695">
    <property type="entry name" value="LIPOPROTEIN SIGNAL PEPTIDASE"/>
    <property type="match status" value="1"/>
</dbReference>
<dbReference type="PANTHER" id="PTHR33695:SF1">
    <property type="entry name" value="LIPOPROTEIN SIGNAL PEPTIDASE"/>
    <property type="match status" value="1"/>
</dbReference>
<dbReference type="Pfam" id="PF01252">
    <property type="entry name" value="Peptidase_A8"/>
    <property type="match status" value="1"/>
</dbReference>
<dbReference type="PRINTS" id="PR00781">
    <property type="entry name" value="LIPOSIGPTASE"/>
</dbReference>
<dbReference type="PROSITE" id="PS00855">
    <property type="entry name" value="SPASE_II"/>
    <property type="match status" value="1"/>
</dbReference>